<accession>P9WPV1</accession>
<accession>L0T995</accession>
<accession>P63662</accession>
<accession>Q10595</accession>
<name>ATPE_MYCTU</name>
<feature type="initiator methionine" description="Removed" evidence="2">
    <location>
        <position position="1"/>
    </location>
</feature>
<feature type="chain" id="PRO_0000188166" description="ATP synthase epsilon chain">
    <location>
        <begin position="2"/>
        <end position="121"/>
    </location>
</feature>
<feature type="strand" evidence="5">
    <location>
        <begin position="4"/>
        <end position="27"/>
    </location>
</feature>
<feature type="strand" evidence="5">
    <location>
        <begin position="30"/>
        <end position="34"/>
    </location>
</feature>
<feature type="strand" evidence="5">
    <location>
        <begin position="41"/>
        <end position="45"/>
    </location>
</feature>
<feature type="strand" evidence="5">
    <location>
        <begin position="47"/>
        <end position="54"/>
    </location>
</feature>
<feature type="strand" evidence="5">
    <location>
        <begin position="56"/>
        <end position="58"/>
    </location>
</feature>
<feature type="strand" evidence="5">
    <location>
        <begin position="61"/>
        <end position="67"/>
    </location>
</feature>
<feature type="strand" evidence="5">
    <location>
        <begin position="69"/>
        <end position="72"/>
    </location>
</feature>
<feature type="turn" evidence="4">
    <location>
        <begin position="74"/>
        <end position="76"/>
    </location>
</feature>
<feature type="strand" evidence="5">
    <location>
        <begin position="77"/>
        <end position="85"/>
    </location>
</feature>
<feature type="helix" evidence="5">
    <location>
        <begin position="87"/>
        <end position="89"/>
    </location>
</feature>
<feature type="helix" evidence="5">
    <location>
        <begin position="92"/>
        <end position="97"/>
    </location>
</feature>
<feature type="turn" evidence="5">
    <location>
        <begin position="98"/>
        <end position="100"/>
    </location>
</feature>
<feature type="helix" evidence="5">
    <location>
        <begin position="104"/>
        <end position="117"/>
    </location>
</feature>
<reference key="1">
    <citation type="journal article" date="1998" name="Nature">
        <title>Deciphering the biology of Mycobacterium tuberculosis from the complete genome sequence.</title>
        <authorList>
            <person name="Cole S.T."/>
            <person name="Brosch R."/>
            <person name="Parkhill J."/>
            <person name="Garnier T."/>
            <person name="Churcher C.M."/>
            <person name="Harris D.E."/>
            <person name="Gordon S.V."/>
            <person name="Eiglmeier K."/>
            <person name="Gas S."/>
            <person name="Barry C.E. III"/>
            <person name="Tekaia F."/>
            <person name="Badcock K."/>
            <person name="Basham D."/>
            <person name="Brown D."/>
            <person name="Chillingworth T."/>
            <person name="Connor R."/>
            <person name="Davies R.M."/>
            <person name="Devlin K."/>
            <person name="Feltwell T."/>
            <person name="Gentles S."/>
            <person name="Hamlin N."/>
            <person name="Holroyd S."/>
            <person name="Hornsby T."/>
            <person name="Jagels K."/>
            <person name="Krogh A."/>
            <person name="McLean J."/>
            <person name="Moule S."/>
            <person name="Murphy L.D."/>
            <person name="Oliver S."/>
            <person name="Osborne J."/>
            <person name="Quail M.A."/>
            <person name="Rajandream M.A."/>
            <person name="Rogers J."/>
            <person name="Rutter S."/>
            <person name="Seeger K."/>
            <person name="Skelton S."/>
            <person name="Squares S."/>
            <person name="Squares R."/>
            <person name="Sulston J.E."/>
            <person name="Taylor K."/>
            <person name="Whitehead S."/>
            <person name="Barrell B.G."/>
        </authorList>
    </citation>
    <scope>NUCLEOTIDE SEQUENCE [LARGE SCALE GENOMIC DNA]</scope>
    <source>
        <strain>ATCC 25618 / H37Rv</strain>
    </source>
</reference>
<reference key="2">
    <citation type="journal article" date="2022" name="Genomics">
        <title>Deep N-terminomics of Mycobacterium tuberculosis H37Rv extensively correct annotated encoding genes.</title>
        <authorList>
            <person name="Shi J."/>
            <person name="Meng S."/>
            <person name="Wan L."/>
            <person name="Zhang Z."/>
            <person name="Jiang S."/>
            <person name="Zhu H."/>
            <person name="Dai E."/>
            <person name="Chang L."/>
            <person name="Gao H."/>
            <person name="Wan K."/>
            <person name="Zhang L."/>
            <person name="Zhao X."/>
            <person name="Liu H."/>
            <person name="Lyu Z."/>
            <person name="Zhang Y."/>
            <person name="Xu P."/>
        </authorList>
    </citation>
    <scope>PROTEIN SEQUENCE OF 2-18</scope>
    <source>
        <strain>H37Rv</strain>
    </source>
</reference>
<reference key="3">
    <citation type="journal article" date="2008" name="BMC Syst. Biol.">
        <title>targetTB: a target identification pipeline for Mycobacterium tuberculosis through an interactome, reactome and genome-scale structural analysis.</title>
        <authorList>
            <person name="Raman K."/>
            <person name="Yeturu K."/>
            <person name="Chandra N."/>
        </authorList>
    </citation>
    <scope>IDENTIFICATION AS A DRUG TARGET [LARGE SCALE ANALYSIS]</scope>
</reference>
<reference key="4">
    <citation type="journal article" date="2011" name="Mol. Cell. Proteomics">
        <title>Proteogenomic analysis of Mycobacterium tuberculosis by high resolution mass spectrometry.</title>
        <authorList>
            <person name="Kelkar D.S."/>
            <person name="Kumar D."/>
            <person name="Kumar P."/>
            <person name="Balakrishnan L."/>
            <person name="Muthusamy B."/>
            <person name="Yadav A.K."/>
            <person name="Shrivastava P."/>
            <person name="Marimuthu A."/>
            <person name="Anand S."/>
            <person name="Sundaram H."/>
            <person name="Kingsbury R."/>
            <person name="Harsha H.C."/>
            <person name="Nair B."/>
            <person name="Prasad T.S."/>
            <person name="Chauhan D.S."/>
            <person name="Katoch K."/>
            <person name="Katoch V.M."/>
            <person name="Kumar P."/>
            <person name="Chaerkady R."/>
            <person name="Ramachandran S."/>
            <person name="Dash D."/>
            <person name="Pandey A."/>
        </authorList>
    </citation>
    <scope>IDENTIFICATION BY MASS SPECTROMETRY [LARGE SCALE ANALYSIS]</scope>
    <source>
        <strain>ATCC 25618 / H37Rv</strain>
    </source>
</reference>
<keyword id="KW-0002">3D-structure</keyword>
<keyword id="KW-0066">ATP synthesis</keyword>
<keyword id="KW-1003">Cell membrane</keyword>
<keyword id="KW-0139">CF(1)</keyword>
<keyword id="KW-0903">Direct protein sequencing</keyword>
<keyword id="KW-0375">Hydrogen ion transport</keyword>
<keyword id="KW-0406">Ion transport</keyword>
<keyword id="KW-0472">Membrane</keyword>
<keyword id="KW-1185">Reference proteome</keyword>
<keyword id="KW-0813">Transport</keyword>
<sequence length="121" mass="13135">MAELNVEIVAVDRNIWSGTAKFLFTRTTVGEIGILPRHIPLVAQLVDDAMVRVEREGEKDLRIAVDGGFLSVTEEGVSILAESAEFESEIDEAAAKQDSESDDPRIAARGRARLRAVGAID</sequence>
<protein>
    <recommendedName>
        <fullName>ATP synthase epsilon chain</fullName>
    </recommendedName>
    <alternativeName>
        <fullName>ATP synthase F1 sector epsilon subunit</fullName>
    </alternativeName>
    <alternativeName>
        <fullName>F-ATPase epsilon subunit</fullName>
    </alternativeName>
</protein>
<proteinExistence type="evidence at protein level"/>
<comment type="function">
    <text evidence="1">Produces ATP from ADP in the presence of a proton gradient across the membrane.</text>
</comment>
<comment type="subunit">
    <text>F-type ATPases have 2 components, CF(1) - the catalytic core - and CF(0) - the membrane proton channel. CF(1) has five subunits: alpha(3), beta(3), gamma(1), delta(1), epsilon(1). CF(0) has three main subunits: a, b and c.</text>
</comment>
<comment type="subcellular location">
    <subcellularLocation>
        <location evidence="1">Cell membrane</location>
        <topology evidence="1">Peripheral membrane protein</topology>
    </subcellularLocation>
</comment>
<comment type="miscellaneous">
    <text>Was identified as a high-confidence drug target.</text>
</comment>
<comment type="similarity">
    <text evidence="3">Belongs to the ATPase epsilon chain family.</text>
</comment>
<evidence type="ECO:0000250" key="1"/>
<evidence type="ECO:0000269" key="2">
    <source>
    </source>
</evidence>
<evidence type="ECO:0000305" key="3"/>
<evidence type="ECO:0007829" key="4">
    <source>
        <dbReference type="PDB" id="5YIO"/>
    </source>
</evidence>
<evidence type="ECO:0007829" key="5">
    <source>
        <dbReference type="PDB" id="8J0S"/>
    </source>
</evidence>
<gene>
    <name type="primary">atpC</name>
    <name type="ordered locus">Rv1311</name>
    <name type="ORF">MTCY373.31</name>
</gene>
<dbReference type="EMBL" id="AL123456">
    <property type="protein sequence ID" value="CCP44068.1"/>
    <property type="molecule type" value="Genomic_DNA"/>
</dbReference>
<dbReference type="PIR" id="C70775">
    <property type="entry name" value="C70775"/>
</dbReference>
<dbReference type="RefSeq" id="NP_215827.1">
    <property type="nucleotide sequence ID" value="NC_000962.3"/>
</dbReference>
<dbReference type="RefSeq" id="WP_003406708.1">
    <property type="nucleotide sequence ID" value="NZ_NVQJ01000030.1"/>
</dbReference>
<dbReference type="PDB" id="2LX5">
    <property type="method" value="NMR"/>
    <property type="chains" value="A=103-120"/>
</dbReference>
<dbReference type="PDB" id="5YIO">
    <property type="method" value="NMR"/>
    <property type="chains" value="A=1-121"/>
</dbReference>
<dbReference type="PDB" id="8J0S">
    <property type="method" value="EM"/>
    <property type="resolution" value="2.58 A"/>
    <property type="chains" value="H=1-121"/>
</dbReference>
<dbReference type="PDB" id="8J0T">
    <property type="method" value="EM"/>
    <property type="resolution" value="2.80 A"/>
    <property type="chains" value="H=1-121"/>
</dbReference>
<dbReference type="PDB" id="8JR0">
    <property type="method" value="EM"/>
    <property type="resolution" value="2.80 A"/>
    <property type="chains" value="H=1-121"/>
</dbReference>
<dbReference type="PDBsum" id="2LX5"/>
<dbReference type="PDBsum" id="5YIO"/>
<dbReference type="PDBsum" id="8J0S"/>
<dbReference type="PDBsum" id="8J0T"/>
<dbReference type="PDBsum" id="8JR0"/>
<dbReference type="EMDB" id="EMD-35909"/>
<dbReference type="EMDB" id="EMD-35911"/>
<dbReference type="EMDB" id="EMD-36589"/>
<dbReference type="SMR" id="P9WPV1"/>
<dbReference type="FunCoup" id="P9WPV1">
    <property type="interactions" value="223"/>
</dbReference>
<dbReference type="STRING" id="83332.Rv1311"/>
<dbReference type="BindingDB" id="P9WPV1"/>
<dbReference type="ChEMBL" id="CHEMBL2364166"/>
<dbReference type="DrugCentral" id="P9WPV1"/>
<dbReference type="PaxDb" id="83332-Rv1311"/>
<dbReference type="DNASU" id="886967"/>
<dbReference type="GeneID" id="886967"/>
<dbReference type="KEGG" id="mtu:Rv1311"/>
<dbReference type="KEGG" id="mtv:RVBD_1311"/>
<dbReference type="TubercuList" id="Rv1311"/>
<dbReference type="eggNOG" id="COG0355">
    <property type="taxonomic scope" value="Bacteria"/>
</dbReference>
<dbReference type="InParanoid" id="P9WPV1"/>
<dbReference type="OrthoDB" id="9791445at2"/>
<dbReference type="PhylomeDB" id="P9WPV1"/>
<dbReference type="PRO" id="PR:P9WPV1"/>
<dbReference type="Proteomes" id="UP000001584">
    <property type="component" value="Chromosome"/>
</dbReference>
<dbReference type="GO" id="GO:0009274">
    <property type="term" value="C:peptidoglycan-based cell wall"/>
    <property type="evidence" value="ECO:0007005"/>
    <property type="project" value="MTBBASE"/>
</dbReference>
<dbReference type="GO" id="GO:0005886">
    <property type="term" value="C:plasma membrane"/>
    <property type="evidence" value="ECO:0007005"/>
    <property type="project" value="MTBBASE"/>
</dbReference>
<dbReference type="GO" id="GO:0045259">
    <property type="term" value="C:proton-transporting ATP synthase complex"/>
    <property type="evidence" value="ECO:0007669"/>
    <property type="project" value="UniProtKB-KW"/>
</dbReference>
<dbReference type="GO" id="GO:0005524">
    <property type="term" value="F:ATP binding"/>
    <property type="evidence" value="ECO:0007669"/>
    <property type="project" value="UniProtKB-UniRule"/>
</dbReference>
<dbReference type="GO" id="GO:0046933">
    <property type="term" value="F:proton-transporting ATP synthase activity, rotational mechanism"/>
    <property type="evidence" value="ECO:0007669"/>
    <property type="project" value="UniProtKB-UniRule"/>
</dbReference>
<dbReference type="GO" id="GO:0015986">
    <property type="term" value="P:proton motive force-driven ATP synthesis"/>
    <property type="evidence" value="ECO:0000318"/>
    <property type="project" value="GO_Central"/>
</dbReference>
<dbReference type="CDD" id="cd12152">
    <property type="entry name" value="F1-ATPase_delta"/>
    <property type="match status" value="1"/>
</dbReference>
<dbReference type="FunFam" id="2.60.15.10:FF:000011">
    <property type="entry name" value="ATP synthase epsilon chain"/>
    <property type="match status" value="1"/>
</dbReference>
<dbReference type="Gene3D" id="2.60.15.10">
    <property type="entry name" value="F0F1 ATP synthase delta/epsilon subunit, N-terminal"/>
    <property type="match status" value="1"/>
</dbReference>
<dbReference type="HAMAP" id="MF_00530">
    <property type="entry name" value="ATP_synth_epsil_bac"/>
    <property type="match status" value="1"/>
</dbReference>
<dbReference type="InterPro" id="IPR001469">
    <property type="entry name" value="ATP_synth_F1_dsu/esu"/>
</dbReference>
<dbReference type="InterPro" id="IPR020546">
    <property type="entry name" value="ATP_synth_F1_dsu/esu_N"/>
</dbReference>
<dbReference type="InterPro" id="IPR036771">
    <property type="entry name" value="ATPsynth_dsu/esu_N"/>
</dbReference>
<dbReference type="NCBIfam" id="TIGR01216">
    <property type="entry name" value="ATP_synt_epsi"/>
    <property type="match status" value="1"/>
</dbReference>
<dbReference type="NCBIfam" id="NF009977">
    <property type="entry name" value="PRK13442.1"/>
    <property type="match status" value="1"/>
</dbReference>
<dbReference type="PANTHER" id="PTHR13822">
    <property type="entry name" value="ATP SYNTHASE DELTA/EPSILON CHAIN"/>
    <property type="match status" value="1"/>
</dbReference>
<dbReference type="PANTHER" id="PTHR13822:SF10">
    <property type="entry name" value="ATP SYNTHASE EPSILON CHAIN, CHLOROPLASTIC"/>
    <property type="match status" value="1"/>
</dbReference>
<dbReference type="Pfam" id="PF02823">
    <property type="entry name" value="ATP-synt_DE_N"/>
    <property type="match status" value="1"/>
</dbReference>
<dbReference type="SUPFAM" id="SSF51344">
    <property type="entry name" value="Epsilon subunit of F1F0-ATP synthase N-terminal domain"/>
    <property type="match status" value="1"/>
</dbReference>
<organism>
    <name type="scientific">Mycobacterium tuberculosis (strain ATCC 25618 / H37Rv)</name>
    <dbReference type="NCBI Taxonomy" id="83332"/>
    <lineage>
        <taxon>Bacteria</taxon>
        <taxon>Bacillati</taxon>
        <taxon>Actinomycetota</taxon>
        <taxon>Actinomycetes</taxon>
        <taxon>Mycobacteriales</taxon>
        <taxon>Mycobacteriaceae</taxon>
        <taxon>Mycobacterium</taxon>
        <taxon>Mycobacterium tuberculosis complex</taxon>
    </lineage>
</organism>